<evidence type="ECO:0000250" key="1">
    <source>
        <dbReference type="UniProtKB" id="Q6EIG7"/>
    </source>
</evidence>
<evidence type="ECO:0000250" key="2">
    <source>
        <dbReference type="UniProtKB" id="Q9JKF4"/>
    </source>
</evidence>
<evidence type="ECO:0000255" key="3"/>
<evidence type="ECO:0000255" key="4">
    <source>
        <dbReference type="PROSITE-ProRule" id="PRU00040"/>
    </source>
</evidence>
<evidence type="ECO:0000305" key="5"/>
<sequence length="209" mass="24555">MVQERHPQRKGVCWTLRLWSTAVISMLLLSTCFIASCMVTYQFTMEKPNRRLSELHTYHSSLTCCSKGTMVSEKLWGCCPNHWKSFGSSCYLISTKENFWSISEQNYIHMGAHLVVINTETEQNYIIHQLNESLSYFLGLSDPQGNSKWQWIDNTPYPNNIKFWHPHEPNLPEEWCASIVYWNPSKWGWNDVFCDSKHNSICETKKIYL</sequence>
<name>CLC6A_RAT</name>
<organism>
    <name type="scientific">Rattus norvegicus</name>
    <name type="common">Rat</name>
    <dbReference type="NCBI Taxonomy" id="10116"/>
    <lineage>
        <taxon>Eukaryota</taxon>
        <taxon>Metazoa</taxon>
        <taxon>Chordata</taxon>
        <taxon>Craniata</taxon>
        <taxon>Vertebrata</taxon>
        <taxon>Euteleostomi</taxon>
        <taxon>Mammalia</taxon>
        <taxon>Eutheria</taxon>
        <taxon>Euarchontoglires</taxon>
        <taxon>Glires</taxon>
        <taxon>Rodentia</taxon>
        <taxon>Myomorpha</taxon>
        <taxon>Muroidea</taxon>
        <taxon>Muridae</taxon>
        <taxon>Murinae</taxon>
        <taxon>Rattus</taxon>
    </lineage>
</organism>
<gene>
    <name type="primary">CLEC6A</name>
</gene>
<accession>D3ZWT9</accession>
<keyword id="KW-1064">Adaptive immunity</keyword>
<keyword id="KW-0106">Calcium</keyword>
<keyword id="KW-1003">Cell membrane</keyword>
<keyword id="KW-1015">Disulfide bond</keyword>
<keyword id="KW-0325">Glycoprotein</keyword>
<keyword id="KW-0391">Immunity</keyword>
<keyword id="KW-0399">Innate immunity</keyword>
<keyword id="KW-0430">Lectin</keyword>
<keyword id="KW-0472">Membrane</keyword>
<keyword id="KW-0479">Metal-binding</keyword>
<keyword id="KW-1185">Reference proteome</keyword>
<keyword id="KW-0735">Signal-anchor</keyword>
<keyword id="KW-0812">Transmembrane</keyword>
<keyword id="KW-1133">Transmembrane helix</keyword>
<proteinExistence type="inferred from homology"/>
<protein>
    <recommendedName>
        <fullName>C-type lectin domain family 6 member A</fullName>
    </recommendedName>
</protein>
<dbReference type="EMBL" id="AABR03032613">
    <property type="status" value="NOT_ANNOTATED_CDS"/>
    <property type="molecule type" value="Genomic_DNA"/>
</dbReference>
<dbReference type="EMBL" id="AABR03035320">
    <property type="status" value="NOT_ANNOTATED_CDS"/>
    <property type="molecule type" value="Genomic_DNA"/>
</dbReference>
<dbReference type="SMR" id="D3ZWT9"/>
<dbReference type="FunCoup" id="D3ZWT9">
    <property type="interactions" value="7"/>
</dbReference>
<dbReference type="STRING" id="10116.ENSRNOP00000013330"/>
<dbReference type="GlyCosmos" id="D3ZWT9">
    <property type="glycosylation" value="1 site, No reported glycans"/>
</dbReference>
<dbReference type="GlyGen" id="D3ZWT9">
    <property type="glycosylation" value="1 site"/>
</dbReference>
<dbReference type="PhosphoSitePlus" id="D3ZWT9"/>
<dbReference type="InParanoid" id="D3ZWT9"/>
<dbReference type="PhylomeDB" id="D3ZWT9"/>
<dbReference type="TreeFam" id="TF333341"/>
<dbReference type="Proteomes" id="UP000002494">
    <property type="component" value="Unplaced"/>
</dbReference>
<dbReference type="GO" id="GO:0009897">
    <property type="term" value="C:external side of plasma membrane"/>
    <property type="evidence" value="ECO:0000318"/>
    <property type="project" value="GO_Central"/>
</dbReference>
<dbReference type="GO" id="GO:0005886">
    <property type="term" value="C:plasma membrane"/>
    <property type="evidence" value="ECO:0000250"/>
    <property type="project" value="UniProtKB"/>
</dbReference>
<dbReference type="GO" id="GO:0005509">
    <property type="term" value="F:calcium ion binding"/>
    <property type="evidence" value="ECO:0000250"/>
    <property type="project" value="UniProtKB"/>
</dbReference>
<dbReference type="GO" id="GO:0030246">
    <property type="term" value="F:carbohydrate binding"/>
    <property type="evidence" value="ECO:0000250"/>
    <property type="project" value="UniProtKB"/>
</dbReference>
<dbReference type="GO" id="GO:0005537">
    <property type="term" value="F:D-mannose binding"/>
    <property type="evidence" value="ECO:0000250"/>
    <property type="project" value="UniProtKB"/>
</dbReference>
<dbReference type="GO" id="GO:0038187">
    <property type="term" value="F:pattern recognition receptor activity"/>
    <property type="evidence" value="ECO:0000250"/>
    <property type="project" value="UniProtKB"/>
</dbReference>
<dbReference type="GO" id="GO:0002250">
    <property type="term" value="P:adaptive immune response"/>
    <property type="evidence" value="ECO:0007669"/>
    <property type="project" value="UniProtKB-KW"/>
</dbReference>
<dbReference type="GO" id="GO:0061760">
    <property type="term" value="P:antifungal innate immune response"/>
    <property type="evidence" value="ECO:0000250"/>
    <property type="project" value="UniProtKB"/>
</dbReference>
<dbReference type="GO" id="GO:0050832">
    <property type="term" value="P:defense response to fungus"/>
    <property type="evidence" value="ECO:0000250"/>
    <property type="project" value="UniProtKB"/>
</dbReference>
<dbReference type="GO" id="GO:0045087">
    <property type="term" value="P:innate immune response"/>
    <property type="evidence" value="ECO:0000250"/>
    <property type="project" value="UniProtKB"/>
</dbReference>
<dbReference type="GO" id="GO:0043123">
    <property type="term" value="P:positive regulation of canonical NF-kappaB signal transduction"/>
    <property type="evidence" value="ECO:0000250"/>
    <property type="project" value="UniProtKB"/>
</dbReference>
<dbReference type="GO" id="GO:0001819">
    <property type="term" value="P:positive regulation of cytokine production"/>
    <property type="evidence" value="ECO:0000250"/>
    <property type="project" value="UniProtKB"/>
</dbReference>
<dbReference type="GO" id="GO:2000318">
    <property type="term" value="P:positive regulation of T-helper 17 type immune response"/>
    <property type="evidence" value="ECO:0000250"/>
    <property type="project" value="UniProtKB"/>
</dbReference>
<dbReference type="CDD" id="cd03590">
    <property type="entry name" value="CLECT_DC-SIGN_like"/>
    <property type="match status" value="1"/>
</dbReference>
<dbReference type="FunFam" id="3.10.100.10:FF:000024">
    <property type="entry name" value="C-type lectin domain family 4 member A"/>
    <property type="match status" value="1"/>
</dbReference>
<dbReference type="Gene3D" id="3.10.100.10">
    <property type="entry name" value="Mannose-Binding Protein A, subunit A"/>
    <property type="match status" value="1"/>
</dbReference>
<dbReference type="InterPro" id="IPR001304">
    <property type="entry name" value="C-type_lectin-like"/>
</dbReference>
<dbReference type="InterPro" id="IPR016186">
    <property type="entry name" value="C-type_lectin-like/link_sf"/>
</dbReference>
<dbReference type="InterPro" id="IPR050111">
    <property type="entry name" value="C-type_lectin/snaclec_domain"/>
</dbReference>
<dbReference type="InterPro" id="IPR018378">
    <property type="entry name" value="C-type_lectin_CS"/>
</dbReference>
<dbReference type="InterPro" id="IPR033989">
    <property type="entry name" value="CD209-like_CTLD"/>
</dbReference>
<dbReference type="InterPro" id="IPR016187">
    <property type="entry name" value="CTDL_fold"/>
</dbReference>
<dbReference type="PANTHER" id="PTHR22803">
    <property type="entry name" value="MANNOSE, PHOSPHOLIPASE, LECTIN RECEPTOR RELATED"/>
    <property type="match status" value="1"/>
</dbReference>
<dbReference type="Pfam" id="PF00059">
    <property type="entry name" value="Lectin_C"/>
    <property type="match status" value="1"/>
</dbReference>
<dbReference type="SMART" id="SM00034">
    <property type="entry name" value="CLECT"/>
    <property type="match status" value="1"/>
</dbReference>
<dbReference type="SUPFAM" id="SSF56436">
    <property type="entry name" value="C-type lectin-like"/>
    <property type="match status" value="1"/>
</dbReference>
<dbReference type="PROSITE" id="PS00615">
    <property type="entry name" value="C_TYPE_LECTIN_1"/>
    <property type="match status" value="1"/>
</dbReference>
<dbReference type="PROSITE" id="PS50041">
    <property type="entry name" value="C_TYPE_LECTIN_2"/>
    <property type="match status" value="1"/>
</dbReference>
<reference key="1">
    <citation type="journal article" date="2004" name="Nature">
        <title>Genome sequence of the Brown Norway rat yields insights into mammalian evolution.</title>
        <authorList>
            <person name="Gibbs R.A."/>
            <person name="Weinstock G.M."/>
            <person name="Metzker M.L."/>
            <person name="Muzny D.M."/>
            <person name="Sodergren E.J."/>
            <person name="Scherer S."/>
            <person name="Scott G."/>
            <person name="Steffen D."/>
            <person name="Worley K.C."/>
            <person name="Burch P.E."/>
            <person name="Okwuonu G."/>
            <person name="Hines S."/>
            <person name="Lewis L."/>
            <person name="Deramo C."/>
            <person name="Delgado O."/>
            <person name="Dugan-Rocha S."/>
            <person name="Miner G."/>
            <person name="Morgan M."/>
            <person name="Hawes A."/>
            <person name="Gill R."/>
            <person name="Holt R.A."/>
            <person name="Adams M.D."/>
            <person name="Amanatides P.G."/>
            <person name="Baden-Tillson H."/>
            <person name="Barnstead M."/>
            <person name="Chin S."/>
            <person name="Evans C.A."/>
            <person name="Ferriera S."/>
            <person name="Fosler C."/>
            <person name="Glodek A."/>
            <person name="Gu Z."/>
            <person name="Jennings D."/>
            <person name="Kraft C.L."/>
            <person name="Nguyen T."/>
            <person name="Pfannkoch C.M."/>
            <person name="Sitter C."/>
            <person name="Sutton G.G."/>
            <person name="Venter J.C."/>
            <person name="Woodage T."/>
            <person name="Smith D."/>
            <person name="Lee H.-M."/>
            <person name="Gustafson E."/>
            <person name="Cahill P."/>
            <person name="Kana A."/>
            <person name="Doucette-Stamm L."/>
            <person name="Weinstock K."/>
            <person name="Fechtel K."/>
            <person name="Weiss R.B."/>
            <person name="Dunn D.M."/>
            <person name="Green E.D."/>
            <person name="Blakesley R.W."/>
            <person name="Bouffard G.G."/>
            <person name="De Jong P.J."/>
            <person name="Osoegawa K."/>
            <person name="Zhu B."/>
            <person name="Marra M."/>
            <person name="Schein J."/>
            <person name="Bosdet I."/>
            <person name="Fjell C."/>
            <person name="Jones S."/>
            <person name="Krzywinski M."/>
            <person name="Mathewson C."/>
            <person name="Siddiqui A."/>
            <person name="Wye N."/>
            <person name="McPherson J."/>
            <person name="Zhao S."/>
            <person name="Fraser C.M."/>
            <person name="Shetty J."/>
            <person name="Shatsman S."/>
            <person name="Geer K."/>
            <person name="Chen Y."/>
            <person name="Abramzon S."/>
            <person name="Nierman W.C."/>
            <person name="Havlak P.H."/>
            <person name="Chen R."/>
            <person name="Durbin K.J."/>
            <person name="Egan A."/>
            <person name="Ren Y."/>
            <person name="Song X.-Z."/>
            <person name="Li B."/>
            <person name="Liu Y."/>
            <person name="Qin X."/>
            <person name="Cawley S."/>
            <person name="Cooney A.J."/>
            <person name="D'Souza L.M."/>
            <person name="Martin K."/>
            <person name="Wu J.Q."/>
            <person name="Gonzalez-Garay M.L."/>
            <person name="Jackson A.R."/>
            <person name="Kalafus K.J."/>
            <person name="McLeod M.P."/>
            <person name="Milosavljevic A."/>
            <person name="Virk D."/>
            <person name="Volkov A."/>
            <person name="Wheeler D.A."/>
            <person name="Zhang Z."/>
            <person name="Bailey J.A."/>
            <person name="Eichler E.E."/>
            <person name="Tuzun E."/>
            <person name="Birney E."/>
            <person name="Mongin E."/>
            <person name="Ureta-Vidal A."/>
            <person name="Woodwark C."/>
            <person name="Zdobnov E."/>
            <person name="Bork P."/>
            <person name="Suyama M."/>
            <person name="Torrents D."/>
            <person name="Alexandersson M."/>
            <person name="Trask B.J."/>
            <person name="Young J.M."/>
            <person name="Huang H."/>
            <person name="Wang H."/>
            <person name="Xing H."/>
            <person name="Daniels S."/>
            <person name="Gietzen D."/>
            <person name="Schmidt J."/>
            <person name="Stevens K."/>
            <person name="Vitt U."/>
            <person name="Wingrove J."/>
            <person name="Camara F."/>
            <person name="Mar Alba M."/>
            <person name="Abril J.F."/>
            <person name="Guigo R."/>
            <person name="Smit A."/>
            <person name="Dubchak I."/>
            <person name="Rubin E.M."/>
            <person name="Couronne O."/>
            <person name="Poliakov A."/>
            <person name="Huebner N."/>
            <person name="Ganten D."/>
            <person name="Goesele C."/>
            <person name="Hummel O."/>
            <person name="Kreitler T."/>
            <person name="Lee Y.-A."/>
            <person name="Monti J."/>
            <person name="Schulz H."/>
            <person name="Zimdahl H."/>
            <person name="Himmelbauer H."/>
            <person name="Lehrach H."/>
            <person name="Jacob H.J."/>
            <person name="Bromberg S."/>
            <person name="Gullings-Handley J."/>
            <person name="Jensen-Seaman M.I."/>
            <person name="Kwitek A.E."/>
            <person name="Lazar J."/>
            <person name="Pasko D."/>
            <person name="Tonellato P.J."/>
            <person name="Twigger S."/>
            <person name="Ponting C.P."/>
            <person name="Duarte J.M."/>
            <person name="Rice S."/>
            <person name="Goodstadt L."/>
            <person name="Beatson S.A."/>
            <person name="Emes R.D."/>
            <person name="Winter E.E."/>
            <person name="Webber C."/>
            <person name="Brandt P."/>
            <person name="Nyakatura G."/>
            <person name="Adetobi M."/>
            <person name="Chiaromonte F."/>
            <person name="Elnitski L."/>
            <person name="Eswara P."/>
            <person name="Hardison R.C."/>
            <person name="Hou M."/>
            <person name="Kolbe D."/>
            <person name="Makova K."/>
            <person name="Miller W."/>
            <person name="Nekrutenko A."/>
            <person name="Riemer C."/>
            <person name="Schwartz S."/>
            <person name="Taylor J."/>
            <person name="Yang S."/>
            <person name="Zhang Y."/>
            <person name="Lindpaintner K."/>
            <person name="Andrews T.D."/>
            <person name="Caccamo M."/>
            <person name="Clamp M."/>
            <person name="Clarke L."/>
            <person name="Curwen V."/>
            <person name="Durbin R.M."/>
            <person name="Eyras E."/>
            <person name="Searle S.M."/>
            <person name="Cooper G.M."/>
            <person name="Batzoglou S."/>
            <person name="Brudno M."/>
            <person name="Sidow A."/>
            <person name="Stone E.A."/>
            <person name="Payseur B.A."/>
            <person name="Bourque G."/>
            <person name="Lopez-Otin C."/>
            <person name="Puente X.S."/>
            <person name="Chakrabarti K."/>
            <person name="Chatterji S."/>
            <person name="Dewey C."/>
            <person name="Pachter L."/>
            <person name="Bray N."/>
            <person name="Yap V.B."/>
            <person name="Caspi A."/>
            <person name="Tesler G."/>
            <person name="Pevzner P.A."/>
            <person name="Haussler D."/>
            <person name="Roskin K.M."/>
            <person name="Baertsch R."/>
            <person name="Clawson H."/>
            <person name="Furey T.S."/>
            <person name="Hinrichs A.S."/>
            <person name="Karolchik D."/>
            <person name="Kent W.J."/>
            <person name="Rosenbloom K.R."/>
            <person name="Trumbower H."/>
            <person name="Weirauch M."/>
            <person name="Cooper D.N."/>
            <person name="Stenson P.D."/>
            <person name="Ma B."/>
            <person name="Brent M."/>
            <person name="Arumugam M."/>
            <person name="Shteynberg D."/>
            <person name="Copley R.R."/>
            <person name="Taylor M.S."/>
            <person name="Riethman H."/>
            <person name="Mudunuri U."/>
            <person name="Peterson J."/>
            <person name="Guyer M."/>
            <person name="Felsenfeld A."/>
            <person name="Old S."/>
            <person name="Mockrin S."/>
            <person name="Collins F.S."/>
        </authorList>
    </citation>
    <scope>NUCLEOTIDE SEQUENCE [LARGE SCALE GENOMIC DNA]</scope>
    <source>
        <strain>Brown Norway</strain>
    </source>
</reference>
<comment type="function">
    <text evidence="1 2">Calcium-dependent lectin that acts as a pattern recognition receptor (PRR) of the innate immune system: specifically recognizes and binds alpha-mannans on C.albicans hypheas (By similarity). Binding of C.albicans alpha-mannans to this receptor complex leads to phosphorylation of the immunoreceptor tyrosine-based activation motif (ITAM) of FCER1G, triggering activation of SYK, CARD9 and NF-kappa-B, consequently driving maturation of antigen-presenting cells and shaping antigen-specific priming of T-cells toward effector T-helper 1 and T-helper 17 cell subtypes (By similarity). Also recognizes, in a mannose-dependent manner, allergens from house dust mite and fungi, by promoting cysteinyl leukotriene production. Recognizes soluble elements from the eggs of Shistosoma mansoni altering adaptive immune responses (By similarity).</text>
</comment>
<comment type="subunit">
    <text evidence="1 2">Associated with FCER1G (By similarity). Heterodimer with CLEC4D; this heterodimer forms a pattern recognition receptor (PRR) against fungal infection (By similarity).</text>
</comment>
<comment type="subcellular location">
    <subcellularLocation>
        <location evidence="1">Cell membrane</location>
        <topology evidence="5">Single-pass type II membrane protein</topology>
    </subcellularLocation>
</comment>
<comment type="domain">
    <text evidence="2">A short stretch of the intracellular domain (AA 8-14) proximal to the transmembrane domain is required for association with Fc receptor gamma chain.</text>
</comment>
<feature type="chain" id="PRO_0000410825" description="C-type lectin domain family 6 member A">
    <location>
        <begin position="1"/>
        <end position="209"/>
    </location>
</feature>
<feature type="topological domain" description="Cytoplasmic" evidence="3">
    <location>
        <begin position="1"/>
        <end position="20"/>
    </location>
</feature>
<feature type="transmembrane region" description="Helical; Signal-anchor for type II membrane protein" evidence="3">
    <location>
        <begin position="21"/>
        <end position="43"/>
    </location>
</feature>
<feature type="topological domain" description="Extracellular" evidence="3">
    <location>
        <begin position="44"/>
        <end position="209"/>
    </location>
</feature>
<feature type="domain" description="C-type lectin" evidence="4">
    <location>
        <begin position="86"/>
        <end position="203"/>
    </location>
</feature>
<feature type="binding site" evidence="1">
    <location>
        <position position="116"/>
    </location>
    <ligand>
        <name>Ca(2+)</name>
        <dbReference type="ChEBI" id="CHEBI:29108"/>
        <label>1</label>
    </ligand>
</feature>
<feature type="binding site" evidence="1">
    <location>
        <position position="118"/>
    </location>
    <ligand>
        <name>Ca(2+)</name>
        <dbReference type="ChEBI" id="CHEBI:29108"/>
        <label>1</label>
    </ligand>
</feature>
<feature type="binding site" evidence="1">
    <location>
        <position position="122"/>
    </location>
    <ligand>
        <name>Ca(2+)</name>
        <dbReference type="ChEBI" id="CHEBI:29108"/>
        <label>1</label>
    </ligand>
</feature>
<feature type="binding site" evidence="1">
    <location>
        <begin position="168"/>
        <end position="170"/>
    </location>
    <ligand>
        <name>alpha-D-mannopyranose</name>
        <dbReference type="ChEBI" id="CHEBI:28729"/>
    </ligand>
</feature>
<feature type="binding site" evidence="1">
    <location>
        <position position="168"/>
    </location>
    <ligand>
        <name>Ca(2+)</name>
        <dbReference type="ChEBI" id="CHEBI:29108"/>
        <label>2</label>
    </ligand>
</feature>
<feature type="binding site" evidence="1">
    <location>
        <position position="170"/>
    </location>
    <ligand>
        <name>Ca(2+)</name>
        <dbReference type="ChEBI" id="CHEBI:29108"/>
        <label>2</label>
    </ligand>
</feature>
<feature type="binding site" evidence="1">
    <location>
        <position position="174"/>
    </location>
    <ligand>
        <name>alpha-D-mannopyranose</name>
        <dbReference type="ChEBI" id="CHEBI:28729"/>
    </ligand>
</feature>
<feature type="binding site" evidence="1">
    <location>
        <position position="174"/>
    </location>
    <ligand>
        <name>Ca(2+)</name>
        <dbReference type="ChEBI" id="CHEBI:29108"/>
        <label>2</label>
    </ligand>
</feature>
<feature type="binding site" evidence="1">
    <location>
        <position position="182"/>
    </location>
    <ligand>
        <name>alpha-D-mannopyranose</name>
        <dbReference type="ChEBI" id="CHEBI:28729"/>
    </ligand>
</feature>
<feature type="binding site" evidence="1">
    <location>
        <begin position="190"/>
        <end position="191"/>
    </location>
    <ligand>
        <name>alpha-D-mannopyranose</name>
        <dbReference type="ChEBI" id="CHEBI:28729"/>
    </ligand>
</feature>
<feature type="binding site" evidence="1">
    <location>
        <position position="190"/>
    </location>
    <ligand>
        <name>Ca(2+)</name>
        <dbReference type="ChEBI" id="CHEBI:29108"/>
        <label>2</label>
    </ligand>
</feature>
<feature type="binding site" evidence="1">
    <location>
        <position position="191"/>
    </location>
    <ligand>
        <name>Ca(2+)</name>
        <dbReference type="ChEBI" id="CHEBI:29108"/>
        <label>2</label>
    </ligand>
</feature>
<feature type="binding site" evidence="1">
    <location>
        <position position="203"/>
    </location>
    <ligand>
        <name>Ca(2+)</name>
        <dbReference type="ChEBI" id="CHEBI:29108"/>
        <label>1</label>
    </ligand>
</feature>
<feature type="glycosylation site" description="N-linked (GlcNAc...) asparagine" evidence="3">
    <location>
        <position position="131"/>
    </location>
</feature>
<feature type="disulfide bond" evidence="1">
    <location>
        <begin position="64"/>
        <end position="78"/>
    </location>
</feature>
<feature type="disulfide bond" evidence="4">
    <location>
        <begin position="79"/>
        <end position="90"/>
    </location>
</feature>
<feature type="disulfide bond" evidence="4">
    <location>
        <begin position="176"/>
        <end position="194"/>
    </location>
</feature>